<comment type="function">
    <text>Participates in the tryptophan-dependent indole-3-acetic acid production, which is a phytohormone released by A.brasilense.</text>
</comment>
<organism>
    <name type="scientific">Azospirillum brasilense</name>
    <dbReference type="NCBI Taxonomy" id="192"/>
    <lineage>
        <taxon>Bacteria</taxon>
        <taxon>Pseudomonadati</taxon>
        <taxon>Pseudomonadota</taxon>
        <taxon>Alphaproteobacteria</taxon>
        <taxon>Rhodospirillales</taxon>
        <taxon>Azospirillaceae</taxon>
        <taxon>Azospirillum</taxon>
    </lineage>
</organism>
<sequence>MPNVTIARESPLQDAVVQLIEELDRYLGDLYPAESNHLLDLQTLAKPDIRFLVARRSGTVVGCGAIAIDTEGGYGEVKRMFVQPTARGGQIGRRLLERIEDEARAAGLSALLLETGVYQATRIALYRKQGFADRGPFGPYGPDPLSLFMEKPL</sequence>
<proteinExistence type="predicted"/>
<reference key="1">
    <citation type="journal article" date="1991" name="Mol. Gen. Genet.">
        <title>Relationship between tryptophan biosynthesis and indole-3-acetic acid production in Azospirillum: identification and sequencing of a trpGDC cluster.</title>
        <authorList>
            <person name="Zimmer W."/>
            <person name="Aparicio C."/>
            <person name="Elmerich C."/>
        </authorList>
    </citation>
    <scope>NUCLEOTIDE SEQUENCE [GENOMIC DNA]</scope>
    <source>
        <strain>ATCC 29145 / DSM 1690 / IMET 11303 / Sp7</strain>
    </source>
</reference>
<accession>P26945</accession>
<name>IAAT_AZOBR</name>
<feature type="chain" id="PRO_0000084124" description="IAA acetyltransferase">
    <location>
        <begin position="1"/>
        <end position="153"/>
    </location>
</feature>
<feature type="domain" description="N-acetyltransferase" evidence="1">
    <location>
        <begin position="4"/>
        <end position="153"/>
    </location>
</feature>
<keyword id="KW-0012">Acyltransferase</keyword>
<keyword id="KW-0808">Transferase</keyword>
<evidence type="ECO:0000255" key="1">
    <source>
        <dbReference type="PROSITE-ProRule" id="PRU00532"/>
    </source>
</evidence>
<dbReference type="EC" id="2.3.1.-"/>
<dbReference type="EMBL" id="X57853">
    <property type="protein sequence ID" value="CAA40987.1"/>
    <property type="molecule type" value="Genomic_DNA"/>
</dbReference>
<dbReference type="PIR" id="S17706">
    <property type="entry name" value="S17706"/>
</dbReference>
<dbReference type="SMR" id="P26945"/>
<dbReference type="GO" id="GO:0016747">
    <property type="term" value="F:acyltransferase activity, transferring groups other than amino-acyl groups"/>
    <property type="evidence" value="ECO:0007669"/>
    <property type="project" value="InterPro"/>
</dbReference>
<dbReference type="CDD" id="cd04301">
    <property type="entry name" value="NAT_SF"/>
    <property type="match status" value="1"/>
</dbReference>
<dbReference type="Gene3D" id="3.40.630.30">
    <property type="match status" value="1"/>
</dbReference>
<dbReference type="InterPro" id="IPR016181">
    <property type="entry name" value="Acyl_CoA_acyltransferase"/>
</dbReference>
<dbReference type="InterPro" id="IPR050832">
    <property type="entry name" value="Bact_Acetyltransf"/>
</dbReference>
<dbReference type="InterPro" id="IPR000182">
    <property type="entry name" value="GNAT_dom"/>
</dbReference>
<dbReference type="PANTHER" id="PTHR43877:SF2">
    <property type="entry name" value="AMINOALKYLPHOSPHONATE N-ACETYLTRANSFERASE-RELATED"/>
    <property type="match status" value="1"/>
</dbReference>
<dbReference type="PANTHER" id="PTHR43877">
    <property type="entry name" value="AMINOALKYLPHOSPHONATE N-ACETYLTRANSFERASE-RELATED-RELATED"/>
    <property type="match status" value="1"/>
</dbReference>
<dbReference type="Pfam" id="PF00583">
    <property type="entry name" value="Acetyltransf_1"/>
    <property type="match status" value="1"/>
</dbReference>
<dbReference type="SUPFAM" id="SSF55729">
    <property type="entry name" value="Acyl-CoA N-acyltransferases (Nat)"/>
    <property type="match status" value="1"/>
</dbReference>
<dbReference type="PROSITE" id="PS51186">
    <property type="entry name" value="GNAT"/>
    <property type="match status" value="1"/>
</dbReference>
<protein>
    <recommendedName>
        <fullName>IAA acetyltransferase</fullName>
        <ecNumber>2.3.1.-</ecNumber>
    </recommendedName>
</protein>